<accession>Q8DTC6</accession>
<dbReference type="EC" id="5.4.2.10" evidence="1"/>
<dbReference type="EMBL" id="AE014133">
    <property type="protein sequence ID" value="AAN59090.1"/>
    <property type="molecule type" value="Genomic_DNA"/>
</dbReference>
<dbReference type="RefSeq" id="NP_721784.1">
    <property type="nucleotide sequence ID" value="NC_004350.2"/>
</dbReference>
<dbReference type="RefSeq" id="WP_002263114.1">
    <property type="nucleotide sequence ID" value="NC_004350.2"/>
</dbReference>
<dbReference type="SMR" id="Q8DTC6"/>
<dbReference type="STRING" id="210007.SMU_1426c"/>
<dbReference type="KEGG" id="smu:SMU_1426c"/>
<dbReference type="PATRIC" id="fig|210007.7.peg.1270"/>
<dbReference type="eggNOG" id="COG1109">
    <property type="taxonomic scope" value="Bacteria"/>
</dbReference>
<dbReference type="HOGENOM" id="CLU_016950_7_0_9"/>
<dbReference type="OrthoDB" id="9806956at2"/>
<dbReference type="PhylomeDB" id="Q8DTC6"/>
<dbReference type="BRENDA" id="5.4.2.10">
    <property type="organism ID" value="5941"/>
</dbReference>
<dbReference type="Proteomes" id="UP000002512">
    <property type="component" value="Chromosome"/>
</dbReference>
<dbReference type="GO" id="GO:0005829">
    <property type="term" value="C:cytosol"/>
    <property type="evidence" value="ECO:0007669"/>
    <property type="project" value="TreeGrafter"/>
</dbReference>
<dbReference type="GO" id="GO:0000287">
    <property type="term" value="F:magnesium ion binding"/>
    <property type="evidence" value="ECO:0007669"/>
    <property type="project" value="UniProtKB-UniRule"/>
</dbReference>
<dbReference type="GO" id="GO:0008966">
    <property type="term" value="F:phosphoglucosamine mutase activity"/>
    <property type="evidence" value="ECO:0007669"/>
    <property type="project" value="UniProtKB-UniRule"/>
</dbReference>
<dbReference type="GO" id="GO:0004615">
    <property type="term" value="F:phosphomannomutase activity"/>
    <property type="evidence" value="ECO:0007669"/>
    <property type="project" value="TreeGrafter"/>
</dbReference>
<dbReference type="GO" id="GO:0005975">
    <property type="term" value="P:carbohydrate metabolic process"/>
    <property type="evidence" value="ECO:0007669"/>
    <property type="project" value="InterPro"/>
</dbReference>
<dbReference type="GO" id="GO:0009252">
    <property type="term" value="P:peptidoglycan biosynthetic process"/>
    <property type="evidence" value="ECO:0007669"/>
    <property type="project" value="TreeGrafter"/>
</dbReference>
<dbReference type="GO" id="GO:0006048">
    <property type="term" value="P:UDP-N-acetylglucosamine biosynthetic process"/>
    <property type="evidence" value="ECO:0007669"/>
    <property type="project" value="TreeGrafter"/>
</dbReference>
<dbReference type="CDD" id="cd05802">
    <property type="entry name" value="GlmM"/>
    <property type="match status" value="1"/>
</dbReference>
<dbReference type="FunFam" id="3.30.310.50:FF:000001">
    <property type="entry name" value="Phosphoglucosamine mutase"/>
    <property type="match status" value="1"/>
</dbReference>
<dbReference type="FunFam" id="3.40.120.10:FF:000001">
    <property type="entry name" value="Phosphoglucosamine mutase"/>
    <property type="match status" value="1"/>
</dbReference>
<dbReference type="FunFam" id="3.40.120.10:FF:000002">
    <property type="entry name" value="Phosphoglucosamine mutase"/>
    <property type="match status" value="1"/>
</dbReference>
<dbReference type="Gene3D" id="3.40.120.10">
    <property type="entry name" value="Alpha-D-Glucose-1,6-Bisphosphate, subunit A, domain 3"/>
    <property type="match status" value="3"/>
</dbReference>
<dbReference type="Gene3D" id="3.30.310.50">
    <property type="entry name" value="Alpha-D-phosphohexomutase, C-terminal domain"/>
    <property type="match status" value="1"/>
</dbReference>
<dbReference type="HAMAP" id="MF_01554_B">
    <property type="entry name" value="GlmM_B"/>
    <property type="match status" value="1"/>
</dbReference>
<dbReference type="InterPro" id="IPR005844">
    <property type="entry name" value="A-D-PHexomutase_a/b/a-I"/>
</dbReference>
<dbReference type="InterPro" id="IPR016055">
    <property type="entry name" value="A-D-PHexomutase_a/b/a-I/II/III"/>
</dbReference>
<dbReference type="InterPro" id="IPR005845">
    <property type="entry name" value="A-D-PHexomutase_a/b/a-II"/>
</dbReference>
<dbReference type="InterPro" id="IPR005846">
    <property type="entry name" value="A-D-PHexomutase_a/b/a-III"/>
</dbReference>
<dbReference type="InterPro" id="IPR005843">
    <property type="entry name" value="A-D-PHexomutase_C"/>
</dbReference>
<dbReference type="InterPro" id="IPR036900">
    <property type="entry name" value="A-D-PHexomutase_C_sf"/>
</dbReference>
<dbReference type="InterPro" id="IPR016066">
    <property type="entry name" value="A-D-PHexomutase_CS"/>
</dbReference>
<dbReference type="InterPro" id="IPR005841">
    <property type="entry name" value="Alpha-D-phosphohexomutase_SF"/>
</dbReference>
<dbReference type="InterPro" id="IPR006352">
    <property type="entry name" value="GlmM_bact"/>
</dbReference>
<dbReference type="InterPro" id="IPR050060">
    <property type="entry name" value="Phosphoglucosamine_mutase"/>
</dbReference>
<dbReference type="NCBIfam" id="TIGR01455">
    <property type="entry name" value="glmM"/>
    <property type="match status" value="1"/>
</dbReference>
<dbReference type="PANTHER" id="PTHR42946:SF1">
    <property type="entry name" value="PHOSPHOGLUCOMUTASE (ALPHA-D-GLUCOSE-1,6-BISPHOSPHATE-DEPENDENT)"/>
    <property type="match status" value="1"/>
</dbReference>
<dbReference type="PANTHER" id="PTHR42946">
    <property type="entry name" value="PHOSPHOHEXOSE MUTASE"/>
    <property type="match status" value="1"/>
</dbReference>
<dbReference type="Pfam" id="PF02878">
    <property type="entry name" value="PGM_PMM_I"/>
    <property type="match status" value="1"/>
</dbReference>
<dbReference type="Pfam" id="PF02879">
    <property type="entry name" value="PGM_PMM_II"/>
    <property type="match status" value="1"/>
</dbReference>
<dbReference type="Pfam" id="PF02880">
    <property type="entry name" value="PGM_PMM_III"/>
    <property type="match status" value="1"/>
</dbReference>
<dbReference type="Pfam" id="PF00408">
    <property type="entry name" value="PGM_PMM_IV"/>
    <property type="match status" value="1"/>
</dbReference>
<dbReference type="PRINTS" id="PR00509">
    <property type="entry name" value="PGMPMM"/>
</dbReference>
<dbReference type="SUPFAM" id="SSF55957">
    <property type="entry name" value="Phosphoglucomutase, C-terminal domain"/>
    <property type="match status" value="1"/>
</dbReference>
<dbReference type="SUPFAM" id="SSF53738">
    <property type="entry name" value="Phosphoglucomutase, first 3 domains"/>
    <property type="match status" value="3"/>
</dbReference>
<dbReference type="PROSITE" id="PS00710">
    <property type="entry name" value="PGM_PMM"/>
    <property type="match status" value="1"/>
</dbReference>
<sequence length="449" mass="48709">MGKYFGTDGVRGEANVELTPELAFKLGRFGGYVLSQHEPDRPRVFVARDTRISGELLESALVAGLLSVGIEVYKLGVLATPGVSYLVRTEQASAGVMISASHNPALDNGIKFFGGDGFKLADEQEAEIEALLDAKEDDLPRPSAQGLGMVVDYPEGLRKYEKFLVSTGSDLEGMKIAIDAANGAASYSARQVFLDLNADITVIGEEPDGLNINDGVGSTHPEQLQNLVKGSDFVIGLAFDGDSDRLIAVDENGEIVDGDKIMYIIGKYLSEKGRLSKNTIVTTVMSNLGFHKALDRENINKKITAVGDRYVVEEMRRSGYNLGGEQSGHVIIMDYNTTGDGQLTAIQLTKVMKETGKTLSELANEVTIYPQKLVNIYVKNDMKNKAMEVPMIAQIIEKMEAEMAGNGRILVRPSGTEPLLRVMAEAPSTEEVNYYVDTIAKVVKTEIGI</sequence>
<keyword id="KW-0413">Isomerase</keyword>
<keyword id="KW-0460">Magnesium</keyword>
<keyword id="KW-0479">Metal-binding</keyword>
<keyword id="KW-0597">Phosphoprotein</keyword>
<keyword id="KW-1185">Reference proteome</keyword>
<protein>
    <recommendedName>
        <fullName evidence="1">Phosphoglucosamine mutase</fullName>
        <ecNumber evidence="1">5.4.2.10</ecNumber>
    </recommendedName>
</protein>
<name>GLMM_STRMU</name>
<feature type="chain" id="PRO_0000147972" description="Phosphoglucosamine mutase">
    <location>
        <begin position="1"/>
        <end position="449"/>
    </location>
</feature>
<feature type="active site" description="Phosphoserine intermediate" evidence="1">
    <location>
        <position position="101"/>
    </location>
</feature>
<feature type="binding site" description="via phosphate group" evidence="1">
    <location>
        <position position="101"/>
    </location>
    <ligand>
        <name>Mg(2+)</name>
        <dbReference type="ChEBI" id="CHEBI:18420"/>
    </ligand>
</feature>
<feature type="binding site" evidence="1">
    <location>
        <position position="240"/>
    </location>
    <ligand>
        <name>Mg(2+)</name>
        <dbReference type="ChEBI" id="CHEBI:18420"/>
    </ligand>
</feature>
<feature type="binding site" evidence="1">
    <location>
        <position position="242"/>
    </location>
    <ligand>
        <name>Mg(2+)</name>
        <dbReference type="ChEBI" id="CHEBI:18420"/>
    </ligand>
</feature>
<feature type="binding site" evidence="1">
    <location>
        <position position="244"/>
    </location>
    <ligand>
        <name>Mg(2+)</name>
        <dbReference type="ChEBI" id="CHEBI:18420"/>
    </ligand>
</feature>
<feature type="modified residue" description="Phosphoserine" evidence="1">
    <location>
        <position position="101"/>
    </location>
</feature>
<evidence type="ECO:0000255" key="1">
    <source>
        <dbReference type="HAMAP-Rule" id="MF_01554"/>
    </source>
</evidence>
<gene>
    <name evidence="1" type="primary">glmM</name>
    <name type="ordered locus">SMU_1426c</name>
</gene>
<proteinExistence type="inferred from homology"/>
<comment type="function">
    <text evidence="1">Catalyzes the conversion of glucosamine-6-phosphate to glucosamine-1-phosphate.</text>
</comment>
<comment type="catalytic activity">
    <reaction evidence="1">
        <text>alpha-D-glucosamine 1-phosphate = D-glucosamine 6-phosphate</text>
        <dbReference type="Rhea" id="RHEA:23424"/>
        <dbReference type="ChEBI" id="CHEBI:58516"/>
        <dbReference type="ChEBI" id="CHEBI:58725"/>
        <dbReference type="EC" id="5.4.2.10"/>
    </reaction>
</comment>
<comment type="cofactor">
    <cofactor evidence="1">
        <name>Mg(2+)</name>
        <dbReference type="ChEBI" id="CHEBI:18420"/>
    </cofactor>
    <text evidence="1">Binds 1 Mg(2+) ion per subunit.</text>
</comment>
<comment type="PTM">
    <text evidence="1">Activated by phosphorylation.</text>
</comment>
<comment type="similarity">
    <text evidence="1">Belongs to the phosphohexose mutase family.</text>
</comment>
<organism>
    <name type="scientific">Streptococcus mutans serotype c (strain ATCC 700610 / UA159)</name>
    <dbReference type="NCBI Taxonomy" id="210007"/>
    <lineage>
        <taxon>Bacteria</taxon>
        <taxon>Bacillati</taxon>
        <taxon>Bacillota</taxon>
        <taxon>Bacilli</taxon>
        <taxon>Lactobacillales</taxon>
        <taxon>Streptococcaceae</taxon>
        <taxon>Streptococcus</taxon>
    </lineage>
</organism>
<reference key="1">
    <citation type="journal article" date="2002" name="Proc. Natl. Acad. Sci. U.S.A.">
        <title>Genome sequence of Streptococcus mutans UA159, a cariogenic dental pathogen.</title>
        <authorList>
            <person name="Ajdic D.J."/>
            <person name="McShan W.M."/>
            <person name="McLaughlin R.E."/>
            <person name="Savic G."/>
            <person name="Chang J."/>
            <person name="Carson M.B."/>
            <person name="Primeaux C."/>
            <person name="Tian R."/>
            <person name="Kenton S."/>
            <person name="Jia H.G."/>
            <person name="Lin S.P."/>
            <person name="Qian Y."/>
            <person name="Li S."/>
            <person name="Zhu H."/>
            <person name="Najar F.Z."/>
            <person name="Lai H."/>
            <person name="White J."/>
            <person name="Roe B.A."/>
            <person name="Ferretti J.J."/>
        </authorList>
    </citation>
    <scope>NUCLEOTIDE SEQUENCE [LARGE SCALE GENOMIC DNA]</scope>
    <source>
        <strain>ATCC 700610 / UA159</strain>
    </source>
</reference>